<evidence type="ECO:0000255" key="1">
    <source>
        <dbReference type="HAMAP-Rule" id="MF_00313"/>
    </source>
</evidence>
<protein>
    <recommendedName>
        <fullName evidence="1">Glutaminase</fullName>
        <ecNumber evidence="1">3.5.1.2</ecNumber>
    </recommendedName>
</protein>
<keyword id="KW-0378">Hydrolase</keyword>
<keyword id="KW-1185">Reference proteome</keyword>
<comment type="catalytic activity">
    <reaction evidence="1">
        <text>L-glutamine + H2O = L-glutamate + NH4(+)</text>
        <dbReference type="Rhea" id="RHEA:15889"/>
        <dbReference type="ChEBI" id="CHEBI:15377"/>
        <dbReference type="ChEBI" id="CHEBI:28938"/>
        <dbReference type="ChEBI" id="CHEBI:29985"/>
        <dbReference type="ChEBI" id="CHEBI:58359"/>
        <dbReference type="EC" id="3.5.1.2"/>
    </reaction>
</comment>
<comment type="subunit">
    <text evidence="1">Homotetramer.</text>
</comment>
<comment type="similarity">
    <text evidence="1">Belongs to the glutaminase family.</text>
</comment>
<reference key="1">
    <citation type="journal article" date="2008" name="Proc. Natl. Acad. Sci. U.S.A.">
        <title>Nitrogen fixation island and rhizosphere competence traits in the genome of root-associated Pseudomonas stutzeri A1501.</title>
        <authorList>
            <person name="Yan Y."/>
            <person name="Yang J."/>
            <person name="Dou Y."/>
            <person name="Chen M."/>
            <person name="Ping S."/>
            <person name="Peng J."/>
            <person name="Lu W."/>
            <person name="Zhang W."/>
            <person name="Yao Z."/>
            <person name="Li H."/>
            <person name="Liu W."/>
            <person name="He S."/>
            <person name="Geng L."/>
            <person name="Zhang X."/>
            <person name="Yang F."/>
            <person name="Yu H."/>
            <person name="Zhan Y."/>
            <person name="Li D."/>
            <person name="Lin Z."/>
            <person name="Wang Y."/>
            <person name="Elmerich C."/>
            <person name="Lin M."/>
            <person name="Jin Q."/>
        </authorList>
    </citation>
    <scope>NUCLEOTIDE SEQUENCE [LARGE SCALE GENOMIC DNA]</scope>
    <source>
        <strain>A1501</strain>
    </source>
</reference>
<proteinExistence type="inferred from homology"/>
<sequence length="302" mass="32726">MHALLQEILDEVRPLLGRGRVADYIPALADVPADQLGIAVCSAEGELFEAGDARTPFSIQSISKVFSLVQAIGHRGESLWERLGHEPSGQPFNSLVQLEFERGRPRNPFINAGALVICDVNQSRFATPELSMRDFVRHLSGNPLIVSDTKVAESEYQHRARNAAMAYLMQAFGNFHNDVEAVLRSYFHHCALRMNCVDLARAFGFLARDGICPQGGEAVLSPRQTKQVNAIMATSGLYDEAGNFAYRVGLPGKSGVGGGIVAVVPGRFTVCVWSPELNAAGNSLIGMAALEALSQRIGWSVF</sequence>
<name>GLSA_STUS1</name>
<feature type="chain" id="PRO_1000048347" description="Glutaminase">
    <location>
        <begin position="1"/>
        <end position="302"/>
    </location>
</feature>
<feature type="binding site" evidence="1">
    <location>
        <position position="61"/>
    </location>
    <ligand>
        <name>substrate</name>
    </ligand>
</feature>
<feature type="binding site" evidence="1">
    <location>
        <position position="111"/>
    </location>
    <ligand>
        <name>substrate</name>
    </ligand>
</feature>
<feature type="binding site" evidence="1">
    <location>
        <position position="155"/>
    </location>
    <ligand>
        <name>substrate</name>
    </ligand>
</feature>
<feature type="binding site" evidence="1">
    <location>
        <position position="162"/>
    </location>
    <ligand>
        <name>substrate</name>
    </ligand>
</feature>
<feature type="binding site" evidence="1">
    <location>
        <position position="186"/>
    </location>
    <ligand>
        <name>substrate</name>
    </ligand>
</feature>
<feature type="binding site" evidence="1">
    <location>
        <position position="238"/>
    </location>
    <ligand>
        <name>substrate</name>
    </ligand>
</feature>
<feature type="binding site" evidence="1">
    <location>
        <position position="256"/>
    </location>
    <ligand>
        <name>substrate</name>
    </ligand>
</feature>
<gene>
    <name evidence="1" type="primary">glsA</name>
    <name type="ordered locus">PST_0190</name>
</gene>
<organism>
    <name type="scientific">Stutzerimonas stutzeri (strain A1501)</name>
    <name type="common">Pseudomonas stutzeri</name>
    <dbReference type="NCBI Taxonomy" id="379731"/>
    <lineage>
        <taxon>Bacteria</taxon>
        <taxon>Pseudomonadati</taxon>
        <taxon>Pseudomonadota</taxon>
        <taxon>Gammaproteobacteria</taxon>
        <taxon>Pseudomonadales</taxon>
        <taxon>Pseudomonadaceae</taxon>
        <taxon>Stutzerimonas</taxon>
    </lineage>
</organism>
<accession>A4VFZ6</accession>
<dbReference type="EC" id="3.5.1.2" evidence="1"/>
<dbReference type="EMBL" id="CP000304">
    <property type="protein sequence ID" value="ABP77897.1"/>
    <property type="molecule type" value="Genomic_DNA"/>
</dbReference>
<dbReference type="RefSeq" id="WP_011911436.1">
    <property type="nucleotide sequence ID" value="NC_009434.1"/>
</dbReference>
<dbReference type="SMR" id="A4VFZ6"/>
<dbReference type="KEGG" id="psa:PST_0190"/>
<dbReference type="eggNOG" id="COG2066">
    <property type="taxonomic scope" value="Bacteria"/>
</dbReference>
<dbReference type="HOGENOM" id="CLU_027932_1_1_6"/>
<dbReference type="Proteomes" id="UP000000233">
    <property type="component" value="Chromosome"/>
</dbReference>
<dbReference type="GO" id="GO:0004359">
    <property type="term" value="F:glutaminase activity"/>
    <property type="evidence" value="ECO:0007669"/>
    <property type="project" value="UniProtKB-UniRule"/>
</dbReference>
<dbReference type="GO" id="GO:0006537">
    <property type="term" value="P:glutamate biosynthetic process"/>
    <property type="evidence" value="ECO:0007669"/>
    <property type="project" value="TreeGrafter"/>
</dbReference>
<dbReference type="GO" id="GO:0006543">
    <property type="term" value="P:glutamine catabolic process"/>
    <property type="evidence" value="ECO:0007669"/>
    <property type="project" value="TreeGrafter"/>
</dbReference>
<dbReference type="FunFam" id="3.40.710.10:FF:000005">
    <property type="entry name" value="Glutaminase"/>
    <property type="match status" value="1"/>
</dbReference>
<dbReference type="Gene3D" id="3.40.710.10">
    <property type="entry name" value="DD-peptidase/beta-lactamase superfamily"/>
    <property type="match status" value="1"/>
</dbReference>
<dbReference type="HAMAP" id="MF_00313">
    <property type="entry name" value="Glutaminase"/>
    <property type="match status" value="1"/>
</dbReference>
<dbReference type="InterPro" id="IPR012338">
    <property type="entry name" value="Beta-lactam/transpept-like"/>
</dbReference>
<dbReference type="InterPro" id="IPR015868">
    <property type="entry name" value="Glutaminase"/>
</dbReference>
<dbReference type="NCBIfam" id="TIGR03814">
    <property type="entry name" value="Gln_ase"/>
    <property type="match status" value="1"/>
</dbReference>
<dbReference type="NCBIfam" id="NF002132">
    <property type="entry name" value="PRK00971.1-1"/>
    <property type="match status" value="1"/>
</dbReference>
<dbReference type="NCBIfam" id="NF002133">
    <property type="entry name" value="PRK00971.1-2"/>
    <property type="match status" value="1"/>
</dbReference>
<dbReference type="PANTHER" id="PTHR12544">
    <property type="entry name" value="GLUTAMINASE"/>
    <property type="match status" value="1"/>
</dbReference>
<dbReference type="PANTHER" id="PTHR12544:SF29">
    <property type="entry name" value="GLUTAMINASE"/>
    <property type="match status" value="1"/>
</dbReference>
<dbReference type="Pfam" id="PF04960">
    <property type="entry name" value="Glutaminase"/>
    <property type="match status" value="1"/>
</dbReference>
<dbReference type="SUPFAM" id="SSF56601">
    <property type="entry name" value="beta-lactamase/transpeptidase-like"/>
    <property type="match status" value="1"/>
</dbReference>